<comment type="function">
    <text evidence="2">One of the essential components for the initiation of protein synthesis. Protects formylmethionyl-tRNA from spontaneous hydrolysis and promotes its binding to the 30S ribosomal subunits. Also involved in the hydrolysis of GTP during the formation of the 70S ribosomal complex.</text>
</comment>
<comment type="subcellular location">
    <subcellularLocation>
        <location evidence="2">Cytoplasm</location>
    </subcellularLocation>
</comment>
<comment type="similarity">
    <text evidence="2">Belongs to the TRAFAC class translation factor GTPase superfamily. Classic translation factor GTPase family. IF-2 subfamily.</text>
</comment>
<sequence length="896" mass="97378">MEKAKLTKNLKLKIKNAQLTKAAGLDKLKQKLAQAGSSDTKNSPASKAQTKEKSSKKTAGTPAPAPEVDLGATESTARRIRAKDRSSFAAEPTVTTALPGDASHLTLDAIPAIKAPEITSVTQKEQTLRECTDTSSVQQEEKKESSEETSPETPERIEETPIIRTRTEPKSVVSIKPKFGPTGKHINHLLAKTFKAPAKETKAASTEETTQQQPRQNDAASHNNKQQPSGTSSRPASSAPSYRRESTSNNNNNAKRGSERDRSKRSDESVKAFTGRDRYGLNEGSSEEDKWRKKRVHKTKKQAEEHVVQCPAHIKIALPITVKDLAAEMKLKASELIQKLFIHGMTYVVNDVLDSQTVVEYIGLEFGCTIEIDSSAKEKLCLVENTVRDEVNATDPEKLIIRSPIVAFMGHVDHGKTTIIDALRQSNMAASEAGAITQHTGAFKCTTPVGEITVLDTPGHEAFSAMRARGAEVCDIVVLVVAGDEGIKEQTIEAIEHAKGANITIVVAINKCDKPNFNVETVYRQLAELDLLPEAWGGSIATINTSAKTGEGLQDLLEMLALQAEVLELKADPSARARGLVIESELHKGLGAVATVLVQNGTLHLGEALVFNDCYGKVKTMHDEHNQLLQSATPSTPVLITGLSAIPKAGDPFIVVKNEKVAKEIISARLAGQQRSAALQKKRPNFDAVLQNKKTLKLIIKADVQGSIEALAHSILNIRSEKVDVEILSSGVGDISESDIRLASASKATVIGFHTSVESHAEPLIKNLNVKVCLFDIIYHAVDAIKEIMTGLLDPIAEEKNLGAAEIKATFKSSQLGTIYGCLVTEGTVVRNQKIRIIRDKEVLWKGSLSSLKRLKEDVKEVKKGMECGILLDNYQQAQVGDILQCYEVIYHPQTL</sequence>
<evidence type="ECO:0000250" key="1"/>
<evidence type="ECO:0000255" key="2">
    <source>
        <dbReference type="HAMAP-Rule" id="MF_00100"/>
    </source>
</evidence>
<evidence type="ECO:0000256" key="3">
    <source>
        <dbReference type="SAM" id="MobiDB-lite"/>
    </source>
</evidence>
<proteinExistence type="inferred from homology"/>
<feature type="chain" id="PRO_1000093770" description="Translation initiation factor IF-2">
    <location>
        <begin position="1"/>
        <end position="896"/>
    </location>
</feature>
<feature type="domain" description="tr-type G">
    <location>
        <begin position="401"/>
        <end position="570"/>
    </location>
</feature>
<feature type="region of interest" description="Disordered" evidence="3">
    <location>
        <begin position="32"/>
        <end position="99"/>
    </location>
</feature>
<feature type="region of interest" description="Disordered" evidence="3">
    <location>
        <begin position="117"/>
        <end position="304"/>
    </location>
</feature>
<feature type="region of interest" description="G1" evidence="1">
    <location>
        <begin position="410"/>
        <end position="417"/>
    </location>
</feature>
<feature type="region of interest" description="G2" evidence="1">
    <location>
        <begin position="435"/>
        <end position="439"/>
    </location>
</feature>
<feature type="region of interest" description="G3" evidence="1">
    <location>
        <begin position="456"/>
        <end position="459"/>
    </location>
</feature>
<feature type="region of interest" description="G4" evidence="1">
    <location>
        <begin position="510"/>
        <end position="513"/>
    </location>
</feature>
<feature type="region of interest" description="G5" evidence="1">
    <location>
        <begin position="546"/>
        <end position="548"/>
    </location>
</feature>
<feature type="compositionally biased region" description="Polar residues" evidence="3">
    <location>
        <begin position="35"/>
        <end position="48"/>
    </location>
</feature>
<feature type="compositionally biased region" description="Basic and acidic residues" evidence="3">
    <location>
        <begin position="153"/>
        <end position="169"/>
    </location>
</feature>
<feature type="compositionally biased region" description="Low complexity" evidence="3">
    <location>
        <begin position="203"/>
        <end position="214"/>
    </location>
</feature>
<feature type="compositionally biased region" description="Polar residues" evidence="3">
    <location>
        <begin position="215"/>
        <end position="227"/>
    </location>
</feature>
<feature type="compositionally biased region" description="Low complexity" evidence="3">
    <location>
        <begin position="228"/>
        <end position="241"/>
    </location>
</feature>
<feature type="compositionally biased region" description="Basic and acidic residues" evidence="3">
    <location>
        <begin position="256"/>
        <end position="280"/>
    </location>
</feature>
<feature type="binding site" evidence="2">
    <location>
        <begin position="410"/>
        <end position="417"/>
    </location>
    <ligand>
        <name>GTP</name>
        <dbReference type="ChEBI" id="CHEBI:37565"/>
    </ligand>
</feature>
<feature type="binding site" evidence="2">
    <location>
        <begin position="456"/>
        <end position="460"/>
    </location>
    <ligand>
        <name>GTP</name>
        <dbReference type="ChEBI" id="CHEBI:37565"/>
    </ligand>
</feature>
<feature type="binding site" evidence="2">
    <location>
        <begin position="510"/>
        <end position="513"/>
    </location>
    <ligand>
        <name>GTP</name>
        <dbReference type="ChEBI" id="CHEBI:37565"/>
    </ligand>
</feature>
<accession>B0B9K4</accession>
<protein>
    <recommendedName>
        <fullName evidence="2">Translation initiation factor IF-2</fullName>
    </recommendedName>
</protein>
<dbReference type="EMBL" id="AM884176">
    <property type="protein sequence ID" value="CAP03791.1"/>
    <property type="molecule type" value="Genomic_DNA"/>
</dbReference>
<dbReference type="RefSeq" id="WP_009873552.1">
    <property type="nucleotide sequence ID" value="NC_010287.1"/>
</dbReference>
<dbReference type="RefSeq" id="YP_001654435.1">
    <property type="nucleotide sequence ID" value="NC_010287.1"/>
</dbReference>
<dbReference type="SMR" id="B0B9K4"/>
<dbReference type="KEGG" id="ctb:CTL0351"/>
<dbReference type="PATRIC" id="fig|471472.4.peg.379"/>
<dbReference type="HOGENOM" id="CLU_006301_3_1_0"/>
<dbReference type="Proteomes" id="UP001154402">
    <property type="component" value="Chromosome"/>
</dbReference>
<dbReference type="GO" id="GO:0005829">
    <property type="term" value="C:cytosol"/>
    <property type="evidence" value="ECO:0007669"/>
    <property type="project" value="TreeGrafter"/>
</dbReference>
<dbReference type="GO" id="GO:0005525">
    <property type="term" value="F:GTP binding"/>
    <property type="evidence" value="ECO:0007669"/>
    <property type="project" value="UniProtKB-KW"/>
</dbReference>
<dbReference type="GO" id="GO:0003924">
    <property type="term" value="F:GTPase activity"/>
    <property type="evidence" value="ECO:0007669"/>
    <property type="project" value="UniProtKB-UniRule"/>
</dbReference>
<dbReference type="GO" id="GO:0003743">
    <property type="term" value="F:translation initiation factor activity"/>
    <property type="evidence" value="ECO:0007669"/>
    <property type="project" value="UniProtKB-UniRule"/>
</dbReference>
<dbReference type="CDD" id="cd01887">
    <property type="entry name" value="IF2_eIF5B"/>
    <property type="match status" value="1"/>
</dbReference>
<dbReference type="CDD" id="cd03702">
    <property type="entry name" value="IF2_mtIF2_II"/>
    <property type="match status" value="1"/>
</dbReference>
<dbReference type="CDD" id="cd03692">
    <property type="entry name" value="mtIF2_IVc"/>
    <property type="match status" value="1"/>
</dbReference>
<dbReference type="FunFam" id="2.40.30.10:FF:000008">
    <property type="entry name" value="Translation initiation factor IF-2"/>
    <property type="match status" value="1"/>
</dbReference>
<dbReference type="FunFam" id="2.40.30.10:FF:000054">
    <property type="entry name" value="Translation initiation factor IF-2"/>
    <property type="match status" value="1"/>
</dbReference>
<dbReference type="FunFam" id="3.40.50.10050:FF:000001">
    <property type="entry name" value="Translation initiation factor IF-2"/>
    <property type="match status" value="1"/>
</dbReference>
<dbReference type="FunFam" id="3.40.50.300:FF:000019">
    <property type="entry name" value="Translation initiation factor IF-2"/>
    <property type="match status" value="1"/>
</dbReference>
<dbReference type="Gene3D" id="3.40.50.300">
    <property type="entry name" value="P-loop containing nucleotide triphosphate hydrolases"/>
    <property type="match status" value="1"/>
</dbReference>
<dbReference type="Gene3D" id="2.40.30.10">
    <property type="entry name" value="Translation factors"/>
    <property type="match status" value="2"/>
</dbReference>
<dbReference type="Gene3D" id="3.40.50.10050">
    <property type="entry name" value="Translation initiation factor IF- 2, domain 3"/>
    <property type="match status" value="1"/>
</dbReference>
<dbReference type="HAMAP" id="MF_00100_B">
    <property type="entry name" value="IF_2_B"/>
    <property type="match status" value="1"/>
</dbReference>
<dbReference type="InterPro" id="IPR053905">
    <property type="entry name" value="EF-G-like_DII"/>
</dbReference>
<dbReference type="InterPro" id="IPR004161">
    <property type="entry name" value="EFTu-like_2"/>
</dbReference>
<dbReference type="InterPro" id="IPR044145">
    <property type="entry name" value="IF2_II"/>
</dbReference>
<dbReference type="InterPro" id="IPR006847">
    <property type="entry name" value="IF2_N"/>
</dbReference>
<dbReference type="InterPro" id="IPR027417">
    <property type="entry name" value="P-loop_NTPase"/>
</dbReference>
<dbReference type="InterPro" id="IPR005225">
    <property type="entry name" value="Small_GTP-bd"/>
</dbReference>
<dbReference type="InterPro" id="IPR000795">
    <property type="entry name" value="T_Tr_GTP-bd_dom"/>
</dbReference>
<dbReference type="InterPro" id="IPR000178">
    <property type="entry name" value="TF_IF2_bacterial-like"/>
</dbReference>
<dbReference type="InterPro" id="IPR015760">
    <property type="entry name" value="TIF_IF2"/>
</dbReference>
<dbReference type="InterPro" id="IPR023115">
    <property type="entry name" value="TIF_IF2_dom3"/>
</dbReference>
<dbReference type="InterPro" id="IPR036925">
    <property type="entry name" value="TIF_IF2_dom3_sf"/>
</dbReference>
<dbReference type="InterPro" id="IPR009000">
    <property type="entry name" value="Transl_B-barrel_sf"/>
</dbReference>
<dbReference type="NCBIfam" id="TIGR00487">
    <property type="entry name" value="IF-2"/>
    <property type="match status" value="1"/>
</dbReference>
<dbReference type="NCBIfam" id="TIGR00231">
    <property type="entry name" value="small_GTP"/>
    <property type="match status" value="1"/>
</dbReference>
<dbReference type="PANTHER" id="PTHR43381:SF5">
    <property type="entry name" value="TR-TYPE G DOMAIN-CONTAINING PROTEIN"/>
    <property type="match status" value="1"/>
</dbReference>
<dbReference type="PANTHER" id="PTHR43381">
    <property type="entry name" value="TRANSLATION INITIATION FACTOR IF-2-RELATED"/>
    <property type="match status" value="1"/>
</dbReference>
<dbReference type="Pfam" id="PF22042">
    <property type="entry name" value="EF-G_D2"/>
    <property type="match status" value="1"/>
</dbReference>
<dbReference type="Pfam" id="PF00009">
    <property type="entry name" value="GTP_EFTU"/>
    <property type="match status" value="1"/>
</dbReference>
<dbReference type="Pfam" id="PF03144">
    <property type="entry name" value="GTP_EFTU_D2"/>
    <property type="match status" value="1"/>
</dbReference>
<dbReference type="Pfam" id="PF11987">
    <property type="entry name" value="IF-2"/>
    <property type="match status" value="1"/>
</dbReference>
<dbReference type="Pfam" id="PF04760">
    <property type="entry name" value="IF2_N"/>
    <property type="match status" value="1"/>
</dbReference>
<dbReference type="SUPFAM" id="SSF52156">
    <property type="entry name" value="Initiation factor IF2/eIF5b, domain 3"/>
    <property type="match status" value="1"/>
</dbReference>
<dbReference type="SUPFAM" id="SSF52540">
    <property type="entry name" value="P-loop containing nucleoside triphosphate hydrolases"/>
    <property type="match status" value="1"/>
</dbReference>
<dbReference type="SUPFAM" id="SSF50447">
    <property type="entry name" value="Translation proteins"/>
    <property type="match status" value="2"/>
</dbReference>
<dbReference type="PROSITE" id="PS51722">
    <property type="entry name" value="G_TR_2"/>
    <property type="match status" value="1"/>
</dbReference>
<dbReference type="PROSITE" id="PS01176">
    <property type="entry name" value="IF2"/>
    <property type="match status" value="1"/>
</dbReference>
<name>IF2_CHLT2</name>
<reference key="1">
    <citation type="journal article" date="2008" name="Genome Res.">
        <title>Chlamydia trachomatis: genome sequence analysis of lymphogranuloma venereum isolates.</title>
        <authorList>
            <person name="Thomson N.R."/>
            <person name="Holden M.T.G."/>
            <person name="Carder C."/>
            <person name="Lennard N."/>
            <person name="Lockey S.J."/>
            <person name="Marsh P."/>
            <person name="Skipp P."/>
            <person name="O'Connor C.D."/>
            <person name="Goodhead I."/>
            <person name="Norbertzcak H."/>
            <person name="Harris B."/>
            <person name="Ormond D."/>
            <person name="Rance R."/>
            <person name="Quail M.A."/>
            <person name="Parkhill J."/>
            <person name="Stephens R.S."/>
            <person name="Clarke I.N."/>
        </authorList>
    </citation>
    <scope>NUCLEOTIDE SEQUENCE [LARGE SCALE GENOMIC DNA]</scope>
    <source>
        <strain>ATCC VR-902B / DSM 19102 / 434/Bu</strain>
    </source>
</reference>
<gene>
    <name evidence="2" type="primary">infB</name>
    <name type="ordered locus">CTL0351</name>
</gene>
<keyword id="KW-0963">Cytoplasm</keyword>
<keyword id="KW-0342">GTP-binding</keyword>
<keyword id="KW-0396">Initiation factor</keyword>
<keyword id="KW-0547">Nucleotide-binding</keyword>
<keyword id="KW-0648">Protein biosynthesis</keyword>
<organism>
    <name type="scientific">Chlamydia trachomatis serovar L2 (strain ATCC VR-902B / DSM 19102 / 434/Bu)</name>
    <dbReference type="NCBI Taxonomy" id="471472"/>
    <lineage>
        <taxon>Bacteria</taxon>
        <taxon>Pseudomonadati</taxon>
        <taxon>Chlamydiota</taxon>
        <taxon>Chlamydiia</taxon>
        <taxon>Chlamydiales</taxon>
        <taxon>Chlamydiaceae</taxon>
        <taxon>Chlamydia/Chlamydophila group</taxon>
        <taxon>Chlamydia</taxon>
    </lineage>
</organism>